<evidence type="ECO:0000255" key="1">
    <source>
        <dbReference type="HAMAP-Rule" id="MF_00461"/>
    </source>
</evidence>
<evidence type="ECO:0000256" key="2">
    <source>
        <dbReference type="SAM" id="MobiDB-lite"/>
    </source>
</evidence>
<evidence type="ECO:0000269" key="3">
    <source>
    </source>
</evidence>
<evidence type="ECO:0000269" key="4">
    <source>
    </source>
</evidence>
<evidence type="ECO:0000303" key="5">
    <source>
    </source>
</evidence>
<evidence type="ECO:0000305" key="6"/>
<evidence type="ECO:0000305" key="7">
    <source>
    </source>
</evidence>
<gene>
    <name evidence="1 5" type="primary">rnfC</name>
</gene>
<feature type="chain" id="PRO_0000073211" description="Ion-translocating oxidoreductase complex subunit C">
    <location>
        <begin position="1"/>
        <end position="519"/>
    </location>
</feature>
<feature type="domain" description="4Fe-4S ferredoxin-type 1" evidence="1">
    <location>
        <begin position="372"/>
        <end position="401"/>
    </location>
</feature>
<feature type="domain" description="4Fe-4S ferredoxin-type 2" evidence="1">
    <location>
        <begin position="411"/>
        <end position="440"/>
    </location>
</feature>
<feature type="region of interest" description="Disordered" evidence="2">
    <location>
        <begin position="494"/>
        <end position="519"/>
    </location>
</feature>
<feature type="binding site" evidence="1">
    <location>
        <position position="381"/>
    </location>
    <ligand>
        <name>[4Fe-4S] cluster</name>
        <dbReference type="ChEBI" id="CHEBI:49883"/>
        <label>1</label>
    </ligand>
</feature>
<feature type="binding site" evidence="1">
    <location>
        <position position="384"/>
    </location>
    <ligand>
        <name>[4Fe-4S] cluster</name>
        <dbReference type="ChEBI" id="CHEBI:49883"/>
        <label>1</label>
    </ligand>
</feature>
<feature type="binding site" evidence="1">
    <location>
        <position position="387"/>
    </location>
    <ligand>
        <name>[4Fe-4S] cluster</name>
        <dbReference type="ChEBI" id="CHEBI:49883"/>
        <label>1</label>
    </ligand>
</feature>
<feature type="binding site" evidence="1">
    <location>
        <position position="391"/>
    </location>
    <ligand>
        <name>[4Fe-4S] cluster</name>
        <dbReference type="ChEBI" id="CHEBI:49883"/>
        <label>2</label>
    </ligand>
</feature>
<feature type="binding site" evidence="1">
    <location>
        <position position="420"/>
    </location>
    <ligand>
        <name>[4Fe-4S] cluster</name>
        <dbReference type="ChEBI" id="CHEBI:49883"/>
        <label>2</label>
    </ligand>
</feature>
<feature type="binding site" evidence="1">
    <location>
        <position position="423"/>
    </location>
    <ligand>
        <name>[4Fe-4S] cluster</name>
        <dbReference type="ChEBI" id="CHEBI:49883"/>
        <label>2</label>
    </ligand>
</feature>
<feature type="binding site" evidence="1">
    <location>
        <position position="426"/>
    </location>
    <ligand>
        <name>[4Fe-4S] cluster</name>
        <dbReference type="ChEBI" id="CHEBI:49883"/>
        <label>2</label>
    </ligand>
</feature>
<feature type="binding site" evidence="1">
    <location>
        <position position="430"/>
    </location>
    <ligand>
        <name>[4Fe-4S] cluster</name>
        <dbReference type="ChEBI" id="CHEBI:49883"/>
        <label>1</label>
    </ligand>
</feature>
<comment type="function">
    <text evidence="1 3">Part of a membrane-bound complex that couples electron transfer with translocation of ions across the membrane (By similarity). Required for nitrogen fixation. Involved in electron transfer to nitrogenase (PubMed:8264535).</text>
</comment>
<comment type="cofactor">
    <cofactor evidence="1">
        <name>[4Fe-4S] cluster</name>
        <dbReference type="ChEBI" id="CHEBI:49883"/>
    </cofactor>
    <text evidence="1">Binds 2 [4Fe-4S] clusters per subunit.</text>
</comment>
<comment type="subunit">
    <text evidence="1 7">The complex is composed of six subunits: RnfA, RnfB, RnfC, RnfD, RnfE and RnfG.</text>
</comment>
<comment type="subcellular location">
    <subcellularLocation>
        <location evidence="1 4">Cellular chromatophore membrane</location>
        <topology evidence="1 4">Peripheral membrane protein</topology>
    </subcellularLocation>
</comment>
<comment type="induction">
    <text evidence="4">Expression is reduced under iron-limiting conditions.</text>
</comment>
<comment type="similarity">
    <text evidence="1">Belongs to the 4Fe4S bacterial-type ferredoxin family. RnfC subfamily.</text>
</comment>
<reference key="1">
    <citation type="journal article" date="1993" name="Mol. Gen. Genet.">
        <title>Identification of a new class of nitrogen fixation genes in Rhodobacter capsulatus: a putative membrane complex involved in electron transport to nitrogenase.</title>
        <authorList>
            <person name="Schmehl M."/>
            <person name="Jahn A."/>
            <person name="Meyer zu Vilsendorf A."/>
            <person name="Hennecke S."/>
            <person name="Masepohl B."/>
            <person name="Schuppler M."/>
            <person name="Marxer M."/>
            <person name="Oelze J."/>
            <person name="Klipp W."/>
        </authorList>
    </citation>
    <scope>NUCLEOTIDE SEQUENCE [GENOMIC DNA]</scope>
    <scope>FUNCTION</scope>
    <scope>GENE NAME</scope>
    <source>
        <strain>B10S</strain>
    </source>
</reference>
<reference key="2">
    <citation type="journal article" date="1998" name="Eur. J. Biochem.">
        <title>Overexpression in Escherichia coli of the rnf genes from Rhodobacter capsulatus -- characterization of two membrane-bound iron-sulfur proteins.</title>
        <authorList>
            <person name="Jouanneau Y."/>
            <person name="Jeong H.-S."/>
            <person name="Hugo N."/>
            <person name="Meyer C."/>
            <person name="Willison J.C."/>
        </authorList>
    </citation>
    <scope>NUCLEOTIDE SEQUENCE [GENOMIC DNA]</scope>
    <scope>PROTEIN SEQUENCE OF 1-6</scope>
    <scope>SUBUNIT</scope>
    <scope>SUBCELLULAR LOCATION</scope>
    <scope>INDUCTION</scope>
    <source>
        <strain>ATCC 33303 / B10</strain>
    </source>
</reference>
<keyword id="KW-0004">4Fe-4S</keyword>
<keyword id="KW-0903">Direct protein sequencing</keyword>
<keyword id="KW-0249">Electron transport</keyword>
<keyword id="KW-0408">Iron</keyword>
<keyword id="KW-0411">Iron-sulfur</keyword>
<keyword id="KW-0472">Membrane</keyword>
<keyword id="KW-0479">Metal-binding</keyword>
<keyword id="KW-0535">Nitrogen fixation</keyword>
<keyword id="KW-0677">Repeat</keyword>
<keyword id="KW-1278">Translocase</keyword>
<keyword id="KW-0813">Transport</keyword>
<name>RNFC_RHOCA</name>
<accession>Q52716</accession>
<accession>O08057</accession>
<accession>Q52712</accession>
<sequence length="519" mass="55588">MRLPSIATLFHPLQSFSIRGGIHPETHKHLTSECEIETMPMPALIRLPLQQHIGAEAEPIVKRDDLVLKGQLIAKARGPLSANIHAPTSGRVIAVGHFVAPHASGLPVPTITIRPDGEDKWGPHLPRLRPENAAPEEIAAQVAAAGIVGMGGATFPSAVKLNLRAKYDLTTLIINGAECEPYLTCDDRLMRERAEEIADGIGIMARALGVKQVFVAIESNKPQAIEAMTRYNRALGYTFKIHVVPTQYPMGSEKHLVKMITGQETPARALTADLGVVVHNIATAHAVHLAVRYGEPLIARTVTVSGHGIRRPANLRVLIGTPVSEIIAHCGGFTEEPDRLLLGGPMMGMPIQNPRVPVVKGTNGILALTAAETPEAKTMPCIRCGRCVQGCPVGLTPFELNARIHAGDLEGAAKVGLMDCLACGCCSYNCPANLPLVQSFQFAKGKLSERQSRKHQQEETKRLAAARKAREEAIAEAKKQMMLKRKAEMAAKKKAEEAAAAAAMPPPATATAIQGEATP</sequence>
<proteinExistence type="evidence at protein level"/>
<dbReference type="EC" id="7.-.-.-" evidence="1 6"/>
<dbReference type="EMBL" id="X72888">
    <property type="protein sequence ID" value="CAA51399.1"/>
    <property type="molecule type" value="Genomic_DNA"/>
</dbReference>
<dbReference type="EMBL" id="Y11913">
    <property type="protein sequence ID" value="CAA72670.1"/>
    <property type="molecule type" value="Genomic_DNA"/>
</dbReference>
<dbReference type="PIR" id="S39893">
    <property type="entry name" value="S39893"/>
</dbReference>
<dbReference type="SMR" id="Q52716"/>
<dbReference type="TCDB" id="3.D.6.1.1">
    <property type="family name" value="the ion (h(+) or na(+))-translocating nadh:ferredoxin oxidoreductase (nfo or rnf) family"/>
</dbReference>
<dbReference type="OMA" id="YPMGSEK"/>
<dbReference type="GO" id="GO:0005886">
    <property type="term" value="C:plasma membrane"/>
    <property type="evidence" value="ECO:0007669"/>
    <property type="project" value="UniProtKB-UniRule"/>
</dbReference>
<dbReference type="GO" id="GO:0042717">
    <property type="term" value="C:plasma membrane-derived chromatophore membrane"/>
    <property type="evidence" value="ECO:0007669"/>
    <property type="project" value="UniProtKB-SubCell"/>
</dbReference>
<dbReference type="GO" id="GO:0051539">
    <property type="term" value="F:4 iron, 4 sulfur cluster binding"/>
    <property type="evidence" value="ECO:0007669"/>
    <property type="project" value="UniProtKB-KW"/>
</dbReference>
<dbReference type="GO" id="GO:0009055">
    <property type="term" value="F:electron transfer activity"/>
    <property type="evidence" value="ECO:0007669"/>
    <property type="project" value="InterPro"/>
</dbReference>
<dbReference type="GO" id="GO:0046872">
    <property type="term" value="F:metal ion binding"/>
    <property type="evidence" value="ECO:0007669"/>
    <property type="project" value="UniProtKB-KW"/>
</dbReference>
<dbReference type="GO" id="GO:0022900">
    <property type="term" value="P:electron transport chain"/>
    <property type="evidence" value="ECO:0007669"/>
    <property type="project" value="UniProtKB-UniRule"/>
</dbReference>
<dbReference type="GO" id="GO:0009399">
    <property type="term" value="P:nitrogen fixation"/>
    <property type="evidence" value="ECO:0007669"/>
    <property type="project" value="UniProtKB-KW"/>
</dbReference>
<dbReference type="Gene3D" id="3.10.20.600">
    <property type="match status" value="1"/>
</dbReference>
<dbReference type="Gene3D" id="3.30.70.20">
    <property type="match status" value="1"/>
</dbReference>
<dbReference type="Gene3D" id="3.40.50.11540">
    <property type="entry name" value="NADH-ubiquinone oxidoreductase 51kDa subunit"/>
    <property type="match status" value="1"/>
</dbReference>
<dbReference type="HAMAP" id="MF_00461">
    <property type="entry name" value="RsxC_RnfC"/>
    <property type="match status" value="1"/>
</dbReference>
<dbReference type="InterPro" id="IPR017896">
    <property type="entry name" value="4Fe4S_Fe-S-bd"/>
</dbReference>
<dbReference type="InterPro" id="IPR017900">
    <property type="entry name" value="4Fe4S_Fe_S_CS"/>
</dbReference>
<dbReference type="InterPro" id="IPR010208">
    <property type="entry name" value="Ion_transpt_RnfC/RsxC"/>
</dbReference>
<dbReference type="InterPro" id="IPR011538">
    <property type="entry name" value="Nuo51_FMN-bd"/>
</dbReference>
<dbReference type="InterPro" id="IPR037225">
    <property type="entry name" value="Nuo51_FMN-bd_sf"/>
</dbReference>
<dbReference type="InterPro" id="IPR026902">
    <property type="entry name" value="RnfC_N"/>
</dbReference>
<dbReference type="InterPro" id="IPR019554">
    <property type="entry name" value="Soluble_ligand-bd"/>
</dbReference>
<dbReference type="NCBIfam" id="NF003454">
    <property type="entry name" value="PRK05035.1"/>
    <property type="match status" value="1"/>
</dbReference>
<dbReference type="NCBIfam" id="TIGR01945">
    <property type="entry name" value="rnfC"/>
    <property type="match status" value="1"/>
</dbReference>
<dbReference type="PANTHER" id="PTHR43034">
    <property type="entry name" value="ION-TRANSLOCATING OXIDOREDUCTASE COMPLEX SUBUNIT C"/>
    <property type="match status" value="1"/>
</dbReference>
<dbReference type="PANTHER" id="PTHR43034:SF2">
    <property type="entry name" value="ION-TRANSLOCATING OXIDOREDUCTASE COMPLEX SUBUNIT C"/>
    <property type="match status" value="1"/>
</dbReference>
<dbReference type="Pfam" id="PF01512">
    <property type="entry name" value="Complex1_51K"/>
    <property type="match status" value="1"/>
</dbReference>
<dbReference type="Pfam" id="PF12838">
    <property type="entry name" value="Fer4_7"/>
    <property type="match status" value="1"/>
</dbReference>
<dbReference type="Pfam" id="PF13375">
    <property type="entry name" value="RnfC_N"/>
    <property type="match status" value="1"/>
</dbReference>
<dbReference type="Pfam" id="PF10531">
    <property type="entry name" value="SLBB"/>
    <property type="match status" value="1"/>
</dbReference>
<dbReference type="SUPFAM" id="SSF46548">
    <property type="entry name" value="alpha-helical ferredoxin"/>
    <property type="match status" value="1"/>
</dbReference>
<dbReference type="SUPFAM" id="SSF142019">
    <property type="entry name" value="Nqo1 FMN-binding domain-like"/>
    <property type="match status" value="1"/>
</dbReference>
<dbReference type="PROSITE" id="PS00198">
    <property type="entry name" value="4FE4S_FER_1"/>
    <property type="match status" value="2"/>
</dbReference>
<dbReference type="PROSITE" id="PS51379">
    <property type="entry name" value="4FE4S_FER_2"/>
    <property type="match status" value="2"/>
</dbReference>
<protein>
    <recommendedName>
        <fullName evidence="1 6">Ion-translocating oxidoreductase complex subunit C</fullName>
        <ecNumber evidence="1 6">7.-.-.-</ecNumber>
    </recommendedName>
    <alternativeName>
        <fullName evidence="6">Nitrogen fixation protein RnfC</fullName>
    </alternativeName>
    <alternativeName>
        <fullName evidence="1 6">Rnf electron transport complex subunit C</fullName>
    </alternativeName>
</protein>
<organism>
    <name type="scientific">Rhodobacter capsulatus</name>
    <name type="common">Rhodopseudomonas capsulata</name>
    <dbReference type="NCBI Taxonomy" id="1061"/>
    <lineage>
        <taxon>Bacteria</taxon>
        <taxon>Pseudomonadati</taxon>
        <taxon>Pseudomonadota</taxon>
        <taxon>Alphaproteobacteria</taxon>
        <taxon>Rhodobacterales</taxon>
        <taxon>Rhodobacter group</taxon>
        <taxon>Rhodobacter</taxon>
    </lineage>
</organism>